<dbReference type="EMBL" id="CP000411">
    <property type="protein sequence ID" value="ABJ57048.1"/>
    <property type="molecule type" value="Genomic_DNA"/>
</dbReference>
<dbReference type="RefSeq" id="WP_002818997.1">
    <property type="nucleotide sequence ID" value="NC_008528.1"/>
</dbReference>
<dbReference type="SMR" id="Q04ES4"/>
<dbReference type="STRING" id="203123.OEOE_1152"/>
<dbReference type="GeneID" id="75065758"/>
<dbReference type="KEGG" id="ooe:OEOE_1152"/>
<dbReference type="eggNOG" id="COG2001">
    <property type="taxonomic scope" value="Bacteria"/>
</dbReference>
<dbReference type="HOGENOM" id="CLU_107907_0_5_9"/>
<dbReference type="Proteomes" id="UP000000774">
    <property type="component" value="Chromosome"/>
</dbReference>
<dbReference type="GO" id="GO:0005737">
    <property type="term" value="C:cytoplasm"/>
    <property type="evidence" value="ECO:0007669"/>
    <property type="project" value="UniProtKB-UniRule"/>
</dbReference>
<dbReference type="GO" id="GO:0009295">
    <property type="term" value="C:nucleoid"/>
    <property type="evidence" value="ECO:0007669"/>
    <property type="project" value="UniProtKB-SubCell"/>
</dbReference>
<dbReference type="GO" id="GO:0003700">
    <property type="term" value="F:DNA-binding transcription factor activity"/>
    <property type="evidence" value="ECO:0007669"/>
    <property type="project" value="UniProtKB-UniRule"/>
</dbReference>
<dbReference type="GO" id="GO:0000976">
    <property type="term" value="F:transcription cis-regulatory region binding"/>
    <property type="evidence" value="ECO:0007669"/>
    <property type="project" value="TreeGrafter"/>
</dbReference>
<dbReference type="GO" id="GO:2000143">
    <property type="term" value="P:negative regulation of DNA-templated transcription initiation"/>
    <property type="evidence" value="ECO:0007669"/>
    <property type="project" value="TreeGrafter"/>
</dbReference>
<dbReference type="CDD" id="cd16321">
    <property type="entry name" value="MraZ_C"/>
    <property type="match status" value="1"/>
</dbReference>
<dbReference type="CDD" id="cd16320">
    <property type="entry name" value="MraZ_N"/>
    <property type="match status" value="1"/>
</dbReference>
<dbReference type="FunFam" id="3.40.1550.20:FF:000002">
    <property type="entry name" value="Transcriptional regulator MraZ"/>
    <property type="match status" value="1"/>
</dbReference>
<dbReference type="Gene3D" id="3.40.1550.20">
    <property type="entry name" value="Transcriptional regulator MraZ domain"/>
    <property type="match status" value="1"/>
</dbReference>
<dbReference type="HAMAP" id="MF_01008">
    <property type="entry name" value="MraZ"/>
    <property type="match status" value="1"/>
</dbReference>
<dbReference type="InterPro" id="IPR003444">
    <property type="entry name" value="MraZ"/>
</dbReference>
<dbReference type="InterPro" id="IPR035644">
    <property type="entry name" value="MraZ_C"/>
</dbReference>
<dbReference type="InterPro" id="IPR020603">
    <property type="entry name" value="MraZ_dom"/>
</dbReference>
<dbReference type="InterPro" id="IPR035642">
    <property type="entry name" value="MraZ_N"/>
</dbReference>
<dbReference type="InterPro" id="IPR038619">
    <property type="entry name" value="MraZ_sf"/>
</dbReference>
<dbReference type="InterPro" id="IPR007159">
    <property type="entry name" value="SpoVT-AbrB_dom"/>
</dbReference>
<dbReference type="InterPro" id="IPR037914">
    <property type="entry name" value="SpoVT-AbrB_sf"/>
</dbReference>
<dbReference type="NCBIfam" id="TIGR00242">
    <property type="entry name" value="division/cell wall cluster transcriptional repressor MraZ"/>
    <property type="match status" value="1"/>
</dbReference>
<dbReference type="PANTHER" id="PTHR34701">
    <property type="entry name" value="TRANSCRIPTIONAL REGULATOR MRAZ"/>
    <property type="match status" value="1"/>
</dbReference>
<dbReference type="PANTHER" id="PTHR34701:SF1">
    <property type="entry name" value="TRANSCRIPTIONAL REGULATOR MRAZ"/>
    <property type="match status" value="1"/>
</dbReference>
<dbReference type="Pfam" id="PF02381">
    <property type="entry name" value="MraZ"/>
    <property type="match status" value="2"/>
</dbReference>
<dbReference type="SUPFAM" id="SSF89447">
    <property type="entry name" value="AbrB/MazE/MraZ-like"/>
    <property type="match status" value="1"/>
</dbReference>
<dbReference type="PROSITE" id="PS51740">
    <property type="entry name" value="SPOVT_ABRB"/>
    <property type="match status" value="2"/>
</dbReference>
<gene>
    <name evidence="1" type="primary">mraZ</name>
    <name type="ordered locus">OEOE_1152</name>
</gene>
<feature type="chain" id="PRO_1000062908" description="Transcriptional regulator MraZ">
    <location>
        <begin position="1"/>
        <end position="143"/>
    </location>
</feature>
<feature type="domain" description="SpoVT-AbrB 1" evidence="2">
    <location>
        <begin position="5"/>
        <end position="47"/>
    </location>
</feature>
<feature type="domain" description="SpoVT-AbrB 2" evidence="2">
    <location>
        <begin position="76"/>
        <end position="119"/>
    </location>
</feature>
<reference key="1">
    <citation type="journal article" date="2006" name="Proc. Natl. Acad. Sci. U.S.A.">
        <title>Comparative genomics of the lactic acid bacteria.</title>
        <authorList>
            <person name="Makarova K.S."/>
            <person name="Slesarev A."/>
            <person name="Wolf Y.I."/>
            <person name="Sorokin A."/>
            <person name="Mirkin B."/>
            <person name="Koonin E.V."/>
            <person name="Pavlov A."/>
            <person name="Pavlova N."/>
            <person name="Karamychev V."/>
            <person name="Polouchine N."/>
            <person name="Shakhova V."/>
            <person name="Grigoriev I."/>
            <person name="Lou Y."/>
            <person name="Rohksar D."/>
            <person name="Lucas S."/>
            <person name="Huang K."/>
            <person name="Goodstein D.M."/>
            <person name="Hawkins T."/>
            <person name="Plengvidhya V."/>
            <person name="Welker D."/>
            <person name="Hughes J."/>
            <person name="Goh Y."/>
            <person name="Benson A."/>
            <person name="Baldwin K."/>
            <person name="Lee J.-H."/>
            <person name="Diaz-Muniz I."/>
            <person name="Dosti B."/>
            <person name="Smeianov V."/>
            <person name="Wechter W."/>
            <person name="Barabote R."/>
            <person name="Lorca G."/>
            <person name="Altermann E."/>
            <person name="Barrangou R."/>
            <person name="Ganesan B."/>
            <person name="Xie Y."/>
            <person name="Rawsthorne H."/>
            <person name="Tamir D."/>
            <person name="Parker C."/>
            <person name="Breidt F."/>
            <person name="Broadbent J.R."/>
            <person name="Hutkins R."/>
            <person name="O'Sullivan D."/>
            <person name="Steele J."/>
            <person name="Unlu G."/>
            <person name="Saier M.H. Jr."/>
            <person name="Klaenhammer T."/>
            <person name="Richardson P."/>
            <person name="Kozyavkin S."/>
            <person name="Weimer B.C."/>
            <person name="Mills D.A."/>
        </authorList>
    </citation>
    <scope>NUCLEOTIDE SEQUENCE [LARGE SCALE GENOMIC DNA]</scope>
    <source>
        <strain>ATCC BAA-331 / PSU-1</strain>
    </source>
</reference>
<keyword id="KW-0963">Cytoplasm</keyword>
<keyword id="KW-0238">DNA-binding</keyword>
<keyword id="KW-1185">Reference proteome</keyword>
<keyword id="KW-0677">Repeat</keyword>
<keyword id="KW-0804">Transcription</keyword>
<keyword id="KW-0805">Transcription regulation</keyword>
<evidence type="ECO:0000255" key="1">
    <source>
        <dbReference type="HAMAP-Rule" id="MF_01008"/>
    </source>
</evidence>
<evidence type="ECO:0000255" key="2">
    <source>
        <dbReference type="PROSITE-ProRule" id="PRU01076"/>
    </source>
</evidence>
<accession>Q04ES4</accession>
<sequence length="143" mass="16596">MFMGEYQHTLDDKSRLIIPAKFRNQLGDTFVVTRWMEHSLFAFPKDEWDKFEEKLNKLPFGAKDARAFRRFVLAGAIESDFDKQGRIIIPTVLKEHAQLNKNVVITGSGNGFEIWSKDNWEEYTAGTAENFDQIAEELTDFDL</sequence>
<proteinExistence type="inferred from homology"/>
<name>MRAZ_OENOB</name>
<comment type="subunit">
    <text evidence="1">Forms oligomers.</text>
</comment>
<comment type="subcellular location">
    <subcellularLocation>
        <location evidence="1">Cytoplasm</location>
        <location evidence="1">Nucleoid</location>
    </subcellularLocation>
</comment>
<comment type="similarity">
    <text evidence="1">Belongs to the MraZ family.</text>
</comment>
<organism>
    <name type="scientific">Oenococcus oeni (strain ATCC BAA-331 / PSU-1)</name>
    <dbReference type="NCBI Taxonomy" id="203123"/>
    <lineage>
        <taxon>Bacteria</taxon>
        <taxon>Bacillati</taxon>
        <taxon>Bacillota</taxon>
        <taxon>Bacilli</taxon>
        <taxon>Lactobacillales</taxon>
        <taxon>Lactobacillaceae</taxon>
        <taxon>Oenococcus</taxon>
    </lineage>
</organism>
<protein>
    <recommendedName>
        <fullName>Transcriptional regulator MraZ</fullName>
    </recommendedName>
</protein>